<accession>Q66JA6</accession>
<proteinExistence type="evidence at transcript level"/>
<name>CAB45_XENLA</name>
<dbReference type="EMBL" id="BC080996">
    <property type="protein sequence ID" value="AAH80996.1"/>
    <property type="molecule type" value="mRNA"/>
</dbReference>
<dbReference type="RefSeq" id="NP_001087611.1">
    <property type="nucleotide sequence ID" value="NM_001094142.1"/>
</dbReference>
<dbReference type="RefSeq" id="XP_018080052.1">
    <property type="nucleotide sequence ID" value="XM_018224563.1"/>
</dbReference>
<dbReference type="GlyCosmos" id="Q66JA6">
    <property type="glycosylation" value="1 site, No reported glycans"/>
</dbReference>
<dbReference type="DNASU" id="447435"/>
<dbReference type="GeneID" id="447435"/>
<dbReference type="KEGG" id="xla:447435"/>
<dbReference type="AGR" id="Xenbase:XB-GENE-956506"/>
<dbReference type="CTD" id="447435"/>
<dbReference type="Xenbase" id="XB-GENE-956506">
    <property type="gene designation" value="sdf4.L"/>
</dbReference>
<dbReference type="OMA" id="FEYINPR"/>
<dbReference type="OrthoDB" id="9978834at2759"/>
<dbReference type="Proteomes" id="UP000186698">
    <property type="component" value="Chromosome 7L"/>
</dbReference>
<dbReference type="Bgee" id="447435">
    <property type="expression patterns" value="Expressed in liver and 19 other cell types or tissues"/>
</dbReference>
<dbReference type="GO" id="GO:0005783">
    <property type="term" value="C:endoplasmic reticulum"/>
    <property type="evidence" value="ECO:0000318"/>
    <property type="project" value="GO_Central"/>
</dbReference>
<dbReference type="GO" id="GO:0005796">
    <property type="term" value="C:Golgi lumen"/>
    <property type="evidence" value="ECO:0007669"/>
    <property type="project" value="UniProtKB-SubCell"/>
</dbReference>
<dbReference type="GO" id="GO:0005509">
    <property type="term" value="F:calcium ion binding"/>
    <property type="evidence" value="ECO:0000318"/>
    <property type="project" value="GO_Central"/>
</dbReference>
<dbReference type="GO" id="GO:0017156">
    <property type="term" value="P:calcium-ion regulated exocytosis"/>
    <property type="evidence" value="ECO:0000318"/>
    <property type="project" value="GO_Central"/>
</dbReference>
<dbReference type="CDD" id="cd16225">
    <property type="entry name" value="EFh_CREC_cab45"/>
    <property type="match status" value="1"/>
</dbReference>
<dbReference type="FunFam" id="1.10.238.10:FF:000120">
    <property type="entry name" value="45 kDa calcium-binding protein"/>
    <property type="match status" value="1"/>
</dbReference>
<dbReference type="FunFam" id="1.10.238.10:FF:000207">
    <property type="entry name" value="Putative 45 kDa calcium-binding protein"/>
    <property type="match status" value="1"/>
</dbReference>
<dbReference type="Gene3D" id="1.10.238.10">
    <property type="entry name" value="EF-hand"/>
    <property type="match status" value="3"/>
</dbReference>
<dbReference type="InterPro" id="IPR027240">
    <property type="entry name" value="CAB45_EFh"/>
</dbReference>
<dbReference type="InterPro" id="IPR011992">
    <property type="entry name" value="EF-hand-dom_pair"/>
</dbReference>
<dbReference type="InterPro" id="IPR018247">
    <property type="entry name" value="EF_Hand_1_Ca_BS"/>
</dbReference>
<dbReference type="InterPro" id="IPR002048">
    <property type="entry name" value="EF_hand_dom"/>
</dbReference>
<dbReference type="PANTHER" id="PTHR10827:SF98">
    <property type="entry name" value="45 KDA CALCIUM-BINDING PROTEIN"/>
    <property type="match status" value="1"/>
</dbReference>
<dbReference type="PANTHER" id="PTHR10827">
    <property type="entry name" value="RETICULOCALBIN"/>
    <property type="match status" value="1"/>
</dbReference>
<dbReference type="Pfam" id="PF13202">
    <property type="entry name" value="EF-hand_5"/>
    <property type="match status" value="1"/>
</dbReference>
<dbReference type="Pfam" id="PF13499">
    <property type="entry name" value="EF-hand_7"/>
    <property type="match status" value="1"/>
</dbReference>
<dbReference type="SMART" id="SM00054">
    <property type="entry name" value="EFh"/>
    <property type="match status" value="5"/>
</dbReference>
<dbReference type="SUPFAM" id="SSF47473">
    <property type="entry name" value="EF-hand"/>
    <property type="match status" value="2"/>
</dbReference>
<dbReference type="PROSITE" id="PS00018">
    <property type="entry name" value="EF_HAND_1"/>
    <property type="match status" value="5"/>
</dbReference>
<dbReference type="PROSITE" id="PS50222">
    <property type="entry name" value="EF_HAND_2"/>
    <property type="match status" value="5"/>
</dbReference>
<protein>
    <recommendedName>
        <fullName>45 kDa calcium-binding protein</fullName>
        <shortName>Cab45</shortName>
    </recommendedName>
    <alternativeName>
        <fullName>Stromal cell-derived factor 4</fullName>
        <shortName>SDF-4</shortName>
    </alternativeName>
</protein>
<organism>
    <name type="scientific">Xenopus laevis</name>
    <name type="common">African clawed frog</name>
    <dbReference type="NCBI Taxonomy" id="8355"/>
    <lineage>
        <taxon>Eukaryota</taxon>
        <taxon>Metazoa</taxon>
        <taxon>Chordata</taxon>
        <taxon>Craniata</taxon>
        <taxon>Vertebrata</taxon>
        <taxon>Euteleostomi</taxon>
        <taxon>Amphibia</taxon>
        <taxon>Batrachia</taxon>
        <taxon>Anura</taxon>
        <taxon>Pipoidea</taxon>
        <taxon>Pipidae</taxon>
        <taxon>Xenopodinae</taxon>
        <taxon>Xenopus</taxon>
        <taxon>Xenopus</taxon>
    </lineage>
</organism>
<keyword id="KW-0106">Calcium</keyword>
<keyword id="KW-0325">Glycoprotein</keyword>
<keyword id="KW-0333">Golgi apparatus</keyword>
<keyword id="KW-0479">Metal-binding</keyword>
<keyword id="KW-1185">Reference proteome</keyword>
<keyword id="KW-0677">Repeat</keyword>
<keyword id="KW-0732">Signal</keyword>
<feature type="signal peptide" evidence="3">
    <location>
        <begin position="1"/>
        <end position="29"/>
    </location>
</feature>
<feature type="chain" id="PRO_0000377520" description="45 kDa calcium-binding protein">
    <location>
        <begin position="30"/>
        <end position="360"/>
    </location>
</feature>
<feature type="domain" description="EF-hand 1" evidence="4">
    <location>
        <begin position="96"/>
        <end position="131"/>
    </location>
</feature>
<feature type="domain" description="EF-hand 2" evidence="4">
    <location>
        <begin position="135"/>
        <end position="170"/>
    </location>
</feature>
<feature type="domain" description="EF-hand 3" evidence="4">
    <location>
        <begin position="231"/>
        <end position="266"/>
    </location>
</feature>
<feature type="domain" description="EF-hand 4" evidence="4">
    <location>
        <begin position="276"/>
        <end position="311"/>
    </location>
</feature>
<feature type="domain" description="EF-hand 5" evidence="4">
    <location>
        <begin position="312"/>
        <end position="347"/>
    </location>
</feature>
<feature type="binding site" evidence="4">
    <location>
        <position position="109"/>
    </location>
    <ligand>
        <name>Ca(2+)</name>
        <dbReference type="ChEBI" id="CHEBI:29108"/>
        <label>1</label>
    </ligand>
</feature>
<feature type="binding site" evidence="4">
    <location>
        <position position="111"/>
    </location>
    <ligand>
        <name>Ca(2+)</name>
        <dbReference type="ChEBI" id="CHEBI:29108"/>
        <label>1</label>
    </ligand>
</feature>
<feature type="binding site" evidence="4">
    <location>
        <position position="113"/>
    </location>
    <ligand>
        <name>Ca(2+)</name>
        <dbReference type="ChEBI" id="CHEBI:29108"/>
        <label>1</label>
    </ligand>
</feature>
<feature type="binding site" evidence="4">
    <location>
        <position position="115"/>
    </location>
    <ligand>
        <name>Ca(2+)</name>
        <dbReference type="ChEBI" id="CHEBI:29108"/>
        <label>1</label>
    </ligand>
</feature>
<feature type="binding site" evidence="4">
    <location>
        <position position="120"/>
    </location>
    <ligand>
        <name>Ca(2+)</name>
        <dbReference type="ChEBI" id="CHEBI:29108"/>
        <label>1</label>
    </ligand>
</feature>
<feature type="binding site" evidence="4">
    <location>
        <position position="148"/>
    </location>
    <ligand>
        <name>Ca(2+)</name>
        <dbReference type="ChEBI" id="CHEBI:29108"/>
        <label>2</label>
    </ligand>
</feature>
<feature type="binding site" evidence="4">
    <location>
        <position position="150"/>
    </location>
    <ligand>
        <name>Ca(2+)</name>
        <dbReference type="ChEBI" id="CHEBI:29108"/>
        <label>2</label>
    </ligand>
</feature>
<feature type="binding site" evidence="4">
    <location>
        <position position="152"/>
    </location>
    <ligand>
        <name>Ca(2+)</name>
        <dbReference type="ChEBI" id="CHEBI:29108"/>
        <label>2</label>
    </ligand>
</feature>
<feature type="binding site" evidence="4">
    <location>
        <position position="154"/>
    </location>
    <ligand>
        <name>Ca(2+)</name>
        <dbReference type="ChEBI" id="CHEBI:29108"/>
        <label>2</label>
    </ligand>
</feature>
<feature type="binding site" evidence="4">
    <location>
        <position position="159"/>
    </location>
    <ligand>
        <name>Ca(2+)</name>
        <dbReference type="ChEBI" id="CHEBI:29108"/>
        <label>2</label>
    </ligand>
</feature>
<feature type="binding site" evidence="4">
    <location>
        <position position="244"/>
    </location>
    <ligand>
        <name>Ca(2+)</name>
        <dbReference type="ChEBI" id="CHEBI:29108"/>
        <label>3</label>
    </ligand>
</feature>
<feature type="binding site" evidence="4">
    <location>
        <position position="246"/>
    </location>
    <ligand>
        <name>Ca(2+)</name>
        <dbReference type="ChEBI" id="CHEBI:29108"/>
        <label>3</label>
    </ligand>
</feature>
<feature type="binding site" evidence="4">
    <location>
        <position position="248"/>
    </location>
    <ligand>
        <name>Ca(2+)</name>
        <dbReference type="ChEBI" id="CHEBI:29108"/>
        <label>3</label>
    </ligand>
</feature>
<feature type="binding site" evidence="4">
    <location>
        <position position="250"/>
    </location>
    <ligand>
        <name>Ca(2+)</name>
        <dbReference type="ChEBI" id="CHEBI:29108"/>
        <label>3</label>
    </ligand>
</feature>
<feature type="binding site" evidence="4">
    <location>
        <position position="255"/>
    </location>
    <ligand>
        <name>Ca(2+)</name>
        <dbReference type="ChEBI" id="CHEBI:29108"/>
        <label>3</label>
    </ligand>
</feature>
<feature type="binding site" evidence="4">
    <location>
        <position position="289"/>
    </location>
    <ligand>
        <name>Ca(2+)</name>
        <dbReference type="ChEBI" id="CHEBI:29108"/>
        <label>4</label>
    </ligand>
</feature>
<feature type="binding site" evidence="4">
    <location>
        <position position="291"/>
    </location>
    <ligand>
        <name>Ca(2+)</name>
        <dbReference type="ChEBI" id="CHEBI:29108"/>
        <label>4</label>
    </ligand>
</feature>
<feature type="binding site" evidence="4">
    <location>
        <position position="293"/>
    </location>
    <ligand>
        <name>Ca(2+)</name>
        <dbReference type="ChEBI" id="CHEBI:29108"/>
        <label>4</label>
    </ligand>
</feature>
<feature type="binding site" evidence="4">
    <location>
        <position position="300"/>
    </location>
    <ligand>
        <name>Ca(2+)</name>
        <dbReference type="ChEBI" id="CHEBI:29108"/>
        <label>4</label>
    </ligand>
</feature>
<feature type="binding site" evidence="4">
    <location>
        <position position="325"/>
    </location>
    <ligand>
        <name>Ca(2+)</name>
        <dbReference type="ChEBI" id="CHEBI:29108"/>
        <label>5</label>
    </ligand>
</feature>
<feature type="binding site" evidence="4">
    <location>
        <position position="327"/>
    </location>
    <ligand>
        <name>Ca(2+)</name>
        <dbReference type="ChEBI" id="CHEBI:29108"/>
        <label>5</label>
    </ligand>
</feature>
<feature type="binding site" evidence="4">
    <location>
        <position position="329"/>
    </location>
    <ligand>
        <name>Ca(2+)</name>
        <dbReference type="ChEBI" id="CHEBI:29108"/>
        <label>5</label>
    </ligand>
</feature>
<feature type="binding site" evidence="4">
    <location>
        <position position="336"/>
    </location>
    <ligand>
        <name>Ca(2+)</name>
        <dbReference type="ChEBI" id="CHEBI:29108"/>
        <label>5</label>
    </ligand>
</feature>
<feature type="glycosylation site" description="N-linked (GlcNAc...) asparagine" evidence="3">
    <location>
        <position position="33"/>
    </location>
</feature>
<gene>
    <name type="primary">sdf4</name>
    <name type="synonym">cab45</name>
</gene>
<comment type="function">
    <text evidence="1">May regulate calcium-dependent activities in the endoplasmic reticulum lumen or post-ER compartment.</text>
</comment>
<comment type="subcellular location">
    <subcellularLocation>
        <location evidence="2">Golgi apparatus lumen</location>
    </subcellularLocation>
</comment>
<comment type="similarity">
    <text evidence="5">Belongs to the CREC family.</text>
</comment>
<reference key="1">
    <citation type="submission" date="2004-08" db="EMBL/GenBank/DDBJ databases">
        <authorList>
            <consortium name="NIH - Xenopus Gene Collection (XGC) project"/>
        </authorList>
    </citation>
    <scope>NUCLEOTIDE SEQUENCE [LARGE SCALE MRNA]</scope>
    <source>
        <tissue>Spleen</tissue>
    </source>
</reference>
<sequence length="360" mass="42234">MVSKQAFLFSLGSLYLSLLFIFLLMDVYARPANNSALKVETKEKATDNKDENEILPPDHLNGVKMEMDGHLNKEFHQEVFLGKELEEFDEDSEPRRNRRKLAAIFAKVDRNEDKQISASEMQRWIMEKTEEHFQEAVNENKLHFRAVDPDGDGHVSWDEYKIKFLASKGFNEKEVAEKLKNNEDLKIDEETQEVLDNLKDRWFQADNPPPDQLLNEEEFLSFLHPEHSRGMLKFMVKEIIRDLDQDGDKKLTLSEFISLPVGTVENQQAQDIDDDWVRDRKKEYEEVIDANHDGIVTMEELEEYMDPMNEYNALNEAKQMIAVADENQDHLLSLEEILKYSEYFTGSKLMDYARNVHEEF</sequence>
<evidence type="ECO:0000250" key="1"/>
<evidence type="ECO:0000250" key="2">
    <source>
        <dbReference type="UniProtKB" id="Q61112"/>
    </source>
</evidence>
<evidence type="ECO:0000255" key="3"/>
<evidence type="ECO:0000255" key="4">
    <source>
        <dbReference type="PROSITE-ProRule" id="PRU00448"/>
    </source>
</evidence>
<evidence type="ECO:0000305" key="5"/>